<protein>
    <recommendedName>
        <fullName evidence="1">Type III pantothenate kinase</fullName>
        <ecNumber evidence="1">2.7.1.33</ecNumber>
    </recommendedName>
    <alternativeName>
        <fullName evidence="1">PanK-III</fullName>
    </alternativeName>
    <alternativeName>
        <fullName evidence="1">Pantothenic acid kinase</fullName>
    </alternativeName>
</protein>
<keyword id="KW-0067">ATP-binding</keyword>
<keyword id="KW-0173">Coenzyme A biosynthesis</keyword>
<keyword id="KW-0963">Cytoplasm</keyword>
<keyword id="KW-0418">Kinase</keyword>
<keyword id="KW-0547">Nucleotide-binding</keyword>
<keyword id="KW-0630">Potassium</keyword>
<keyword id="KW-0808">Transferase</keyword>
<dbReference type="EC" id="2.7.1.33" evidence="1"/>
<dbReference type="EMBL" id="AM902716">
    <property type="protein sequence ID" value="CAP45162.1"/>
    <property type="molecule type" value="Genomic_DNA"/>
</dbReference>
<dbReference type="SMR" id="A9IH79"/>
<dbReference type="STRING" id="94624.Bpet4810"/>
<dbReference type="KEGG" id="bpt:Bpet4810"/>
<dbReference type="eggNOG" id="COG1521">
    <property type="taxonomic scope" value="Bacteria"/>
</dbReference>
<dbReference type="UniPathway" id="UPA00241">
    <property type="reaction ID" value="UER00352"/>
</dbReference>
<dbReference type="Proteomes" id="UP000001225">
    <property type="component" value="Chromosome"/>
</dbReference>
<dbReference type="GO" id="GO:0005737">
    <property type="term" value="C:cytoplasm"/>
    <property type="evidence" value="ECO:0007669"/>
    <property type="project" value="UniProtKB-SubCell"/>
</dbReference>
<dbReference type="GO" id="GO:0005524">
    <property type="term" value="F:ATP binding"/>
    <property type="evidence" value="ECO:0007669"/>
    <property type="project" value="UniProtKB-UniRule"/>
</dbReference>
<dbReference type="GO" id="GO:0004594">
    <property type="term" value="F:pantothenate kinase activity"/>
    <property type="evidence" value="ECO:0007669"/>
    <property type="project" value="UniProtKB-UniRule"/>
</dbReference>
<dbReference type="GO" id="GO:0015937">
    <property type="term" value="P:coenzyme A biosynthetic process"/>
    <property type="evidence" value="ECO:0007669"/>
    <property type="project" value="UniProtKB-UniRule"/>
</dbReference>
<dbReference type="CDD" id="cd24015">
    <property type="entry name" value="ASKHA_NBD_PanK-III"/>
    <property type="match status" value="1"/>
</dbReference>
<dbReference type="Gene3D" id="3.30.420.40">
    <property type="match status" value="2"/>
</dbReference>
<dbReference type="HAMAP" id="MF_01274">
    <property type="entry name" value="Pantothen_kinase_3"/>
    <property type="match status" value="1"/>
</dbReference>
<dbReference type="InterPro" id="IPR043129">
    <property type="entry name" value="ATPase_NBD"/>
</dbReference>
<dbReference type="InterPro" id="IPR004619">
    <property type="entry name" value="Type_III_PanK"/>
</dbReference>
<dbReference type="NCBIfam" id="NF009869">
    <property type="entry name" value="PRK13328.1-5"/>
    <property type="match status" value="1"/>
</dbReference>
<dbReference type="PANTHER" id="PTHR34265">
    <property type="entry name" value="TYPE III PANTOTHENATE KINASE"/>
    <property type="match status" value="1"/>
</dbReference>
<dbReference type="PANTHER" id="PTHR34265:SF1">
    <property type="entry name" value="TYPE III PANTOTHENATE KINASE"/>
    <property type="match status" value="1"/>
</dbReference>
<dbReference type="Pfam" id="PF03309">
    <property type="entry name" value="Pan_kinase"/>
    <property type="match status" value="1"/>
</dbReference>
<dbReference type="SUPFAM" id="SSF53067">
    <property type="entry name" value="Actin-like ATPase domain"/>
    <property type="match status" value="2"/>
</dbReference>
<evidence type="ECO:0000255" key="1">
    <source>
        <dbReference type="HAMAP-Rule" id="MF_01274"/>
    </source>
</evidence>
<name>COAX_BORPD</name>
<feature type="chain" id="PRO_1000140224" description="Type III pantothenate kinase">
    <location>
        <begin position="1"/>
        <end position="264"/>
    </location>
</feature>
<feature type="active site" description="Proton acceptor" evidence="1">
    <location>
        <position position="101"/>
    </location>
</feature>
<feature type="binding site" evidence="1">
    <location>
        <begin position="6"/>
        <end position="13"/>
    </location>
    <ligand>
        <name>ATP</name>
        <dbReference type="ChEBI" id="CHEBI:30616"/>
    </ligand>
</feature>
<feature type="binding site" evidence="1">
    <location>
        <position position="92"/>
    </location>
    <ligand>
        <name>substrate</name>
    </ligand>
</feature>
<feature type="binding site" evidence="1">
    <location>
        <begin position="99"/>
        <end position="102"/>
    </location>
    <ligand>
        <name>substrate</name>
    </ligand>
</feature>
<feature type="binding site" evidence="1">
    <location>
        <position position="127"/>
    </location>
    <ligand>
        <name>ATP</name>
        <dbReference type="ChEBI" id="CHEBI:30616"/>
    </ligand>
</feature>
<feature type="binding site" evidence="1">
    <location>
        <position position="177"/>
    </location>
    <ligand>
        <name>substrate</name>
    </ligand>
</feature>
<reference key="1">
    <citation type="journal article" date="2008" name="BMC Genomics">
        <title>The missing link: Bordetella petrii is endowed with both the metabolic versatility of environmental bacteria and virulence traits of pathogenic Bordetellae.</title>
        <authorList>
            <person name="Gross R."/>
            <person name="Guzman C.A."/>
            <person name="Sebaihia M."/>
            <person name="Martin dos Santos V.A.P."/>
            <person name="Pieper D.H."/>
            <person name="Koebnik R."/>
            <person name="Lechner M."/>
            <person name="Bartels D."/>
            <person name="Buhrmester J."/>
            <person name="Choudhuri J.V."/>
            <person name="Ebensen T."/>
            <person name="Gaigalat L."/>
            <person name="Herrmann S."/>
            <person name="Khachane A.N."/>
            <person name="Larisch C."/>
            <person name="Link S."/>
            <person name="Linke B."/>
            <person name="Meyer F."/>
            <person name="Mormann S."/>
            <person name="Nakunst D."/>
            <person name="Rueckert C."/>
            <person name="Schneiker-Bekel S."/>
            <person name="Schulze K."/>
            <person name="Voerholter F.-J."/>
            <person name="Yevsa T."/>
            <person name="Engle J.T."/>
            <person name="Goldman W.E."/>
            <person name="Puehler A."/>
            <person name="Goebel U.B."/>
            <person name="Goesmann A."/>
            <person name="Bloecker H."/>
            <person name="Kaiser O."/>
            <person name="Martinez-Arias R."/>
        </authorList>
    </citation>
    <scope>NUCLEOTIDE SEQUENCE [LARGE SCALE GENOMIC DNA]</scope>
    <source>
        <strain>ATCC BAA-461 / DSM 12804 / CCUG 43448</strain>
    </source>
</reference>
<comment type="function">
    <text evidence="1">Catalyzes the phosphorylation of pantothenate (Pan), the first step in CoA biosynthesis.</text>
</comment>
<comment type="catalytic activity">
    <reaction evidence="1">
        <text>(R)-pantothenate + ATP = (R)-4'-phosphopantothenate + ADP + H(+)</text>
        <dbReference type="Rhea" id="RHEA:16373"/>
        <dbReference type="ChEBI" id="CHEBI:10986"/>
        <dbReference type="ChEBI" id="CHEBI:15378"/>
        <dbReference type="ChEBI" id="CHEBI:29032"/>
        <dbReference type="ChEBI" id="CHEBI:30616"/>
        <dbReference type="ChEBI" id="CHEBI:456216"/>
        <dbReference type="EC" id="2.7.1.33"/>
    </reaction>
</comment>
<comment type="cofactor">
    <cofactor evidence="1">
        <name>NH4(+)</name>
        <dbReference type="ChEBI" id="CHEBI:28938"/>
    </cofactor>
    <cofactor evidence="1">
        <name>K(+)</name>
        <dbReference type="ChEBI" id="CHEBI:29103"/>
    </cofactor>
    <text evidence="1">A monovalent cation. Ammonium or potassium.</text>
</comment>
<comment type="pathway">
    <text evidence="1">Cofactor biosynthesis; coenzyme A biosynthesis; CoA from (R)-pantothenate: step 1/5.</text>
</comment>
<comment type="subunit">
    <text evidence="1">Homodimer.</text>
</comment>
<comment type="subcellular location">
    <subcellularLocation>
        <location evidence="1">Cytoplasm</location>
    </subcellularLocation>
</comment>
<comment type="similarity">
    <text evidence="1">Belongs to the type III pantothenate kinase family.</text>
</comment>
<sequence>MILLIDSGNSRLKVGWLDNGAREPAAVAFDNLDPHALGDWLGTLSRKPTLALGVNVAGAERGEGIRAALAGHGCPVHWITSRPQLLGLRNGYTQPAQLGADRLVSLLGVRSRLAQTHPPFVLASFGTATTIDTVGPDNAFAGGLILPGPALMRSSLARGTANLPLADGPVVDFPVDTHQAIASGIAAAQAGAVVRQWLAACRHYGCAADIYVAGGGWPEVQQETERLLAQAAAIAGAPPLPAYLDRPVLDGLALLAAQPDPQSL</sequence>
<proteinExistence type="inferred from homology"/>
<gene>
    <name evidence="1" type="primary">coaX</name>
    <name type="ordered locus">Bpet4810</name>
</gene>
<organism>
    <name type="scientific">Bordetella petrii (strain ATCC BAA-461 / DSM 12804 / CCUG 43448)</name>
    <dbReference type="NCBI Taxonomy" id="340100"/>
    <lineage>
        <taxon>Bacteria</taxon>
        <taxon>Pseudomonadati</taxon>
        <taxon>Pseudomonadota</taxon>
        <taxon>Betaproteobacteria</taxon>
        <taxon>Burkholderiales</taxon>
        <taxon>Alcaligenaceae</taxon>
        <taxon>Bordetella</taxon>
    </lineage>
</organism>
<accession>A9IH79</accession>